<evidence type="ECO:0000255" key="1"/>
<evidence type="ECO:0000305" key="2"/>
<protein>
    <recommendedName>
        <fullName>Putative purine permease YbbY</fullName>
    </recommendedName>
</protein>
<organism>
    <name type="scientific">Escherichia coli (strain K12)</name>
    <dbReference type="NCBI Taxonomy" id="83333"/>
    <lineage>
        <taxon>Bacteria</taxon>
        <taxon>Pseudomonadati</taxon>
        <taxon>Pseudomonadota</taxon>
        <taxon>Gammaproteobacteria</taxon>
        <taxon>Enterobacterales</taxon>
        <taxon>Enterobacteriaceae</taxon>
        <taxon>Escherichia</taxon>
    </lineage>
</organism>
<dbReference type="EMBL" id="U89279">
    <property type="protein sequence ID" value="AAB93854.1"/>
    <property type="molecule type" value="Genomic_DNA"/>
</dbReference>
<dbReference type="EMBL" id="U82664">
    <property type="protein sequence ID" value="AAB40265.1"/>
    <property type="status" value="ALT_INIT"/>
    <property type="molecule type" value="Genomic_DNA"/>
</dbReference>
<dbReference type="EMBL" id="U00096">
    <property type="protein sequence ID" value="AAC73615.2"/>
    <property type="molecule type" value="Genomic_DNA"/>
</dbReference>
<dbReference type="EMBL" id="AP009048">
    <property type="protein sequence ID" value="BAE76291.1"/>
    <property type="molecule type" value="Genomic_DNA"/>
</dbReference>
<dbReference type="RefSeq" id="NP_415046.4">
    <property type="nucleotide sequence ID" value="NC_000913.3"/>
</dbReference>
<dbReference type="RefSeq" id="WP_001302767.1">
    <property type="nucleotide sequence ID" value="NZ_SSZK01000024.1"/>
</dbReference>
<dbReference type="SMR" id="P77328"/>
<dbReference type="BioGRID" id="4259872">
    <property type="interactions" value="210"/>
</dbReference>
<dbReference type="FunCoup" id="P77328">
    <property type="interactions" value="28"/>
</dbReference>
<dbReference type="IntAct" id="P77328">
    <property type="interactions" value="1"/>
</dbReference>
<dbReference type="STRING" id="511145.b0513"/>
<dbReference type="TCDB" id="2.A.40.5.1">
    <property type="family name" value="the nucleobase/ascorbate transporter (nat) or nucleobase:cation symporter-2 (ncs2) family"/>
</dbReference>
<dbReference type="PaxDb" id="511145-b0513"/>
<dbReference type="DNASU" id="945131"/>
<dbReference type="EnsemblBacteria" id="AAC73615">
    <property type="protein sequence ID" value="AAC73615"/>
    <property type="gene ID" value="b0513"/>
</dbReference>
<dbReference type="GeneID" id="945131"/>
<dbReference type="KEGG" id="ecj:JW0501"/>
<dbReference type="KEGG" id="eco:b0513"/>
<dbReference type="KEGG" id="ecoc:C3026_02515"/>
<dbReference type="PATRIC" id="fig|1411691.4.peg.1765"/>
<dbReference type="EchoBASE" id="EB3385"/>
<dbReference type="eggNOG" id="COG2233">
    <property type="taxonomic scope" value="Bacteria"/>
</dbReference>
<dbReference type="HOGENOM" id="CLU_017959_0_0_6"/>
<dbReference type="InParanoid" id="P77328"/>
<dbReference type="OMA" id="WGVYTIY"/>
<dbReference type="OrthoDB" id="5597247at2"/>
<dbReference type="PhylomeDB" id="P77328"/>
<dbReference type="BioCyc" id="EcoCyc:G6282-MONOMER"/>
<dbReference type="PRO" id="PR:P77328"/>
<dbReference type="Proteomes" id="UP000000625">
    <property type="component" value="Chromosome"/>
</dbReference>
<dbReference type="GO" id="GO:0005886">
    <property type="term" value="C:plasma membrane"/>
    <property type="evidence" value="ECO:0000255"/>
    <property type="project" value="EcoCyc"/>
</dbReference>
<dbReference type="GO" id="GO:0042907">
    <property type="term" value="F:xanthine transmembrane transporter activity"/>
    <property type="evidence" value="ECO:0000318"/>
    <property type="project" value="GO_Central"/>
</dbReference>
<dbReference type="GO" id="GO:0042906">
    <property type="term" value="P:xanthine transport"/>
    <property type="evidence" value="ECO:0000318"/>
    <property type="project" value="GO_Central"/>
</dbReference>
<dbReference type="InterPro" id="IPR006043">
    <property type="entry name" value="NCS2"/>
</dbReference>
<dbReference type="NCBIfam" id="NF037981">
    <property type="entry name" value="NCS2_1"/>
    <property type="match status" value="1"/>
</dbReference>
<dbReference type="NCBIfam" id="NF008502">
    <property type="entry name" value="PRK11412.1"/>
    <property type="match status" value="1"/>
</dbReference>
<dbReference type="PANTHER" id="PTHR42810">
    <property type="entry name" value="PURINE PERMEASE C1399.01C-RELATED"/>
    <property type="match status" value="1"/>
</dbReference>
<dbReference type="PANTHER" id="PTHR42810:SF6">
    <property type="entry name" value="PURINE PERMEASE YBBY-RELATED"/>
    <property type="match status" value="1"/>
</dbReference>
<dbReference type="Pfam" id="PF00860">
    <property type="entry name" value="Xan_ur_permease"/>
    <property type="match status" value="1"/>
</dbReference>
<sequence>MFNFAVSRESLLSGFQWFFFIFCNTVVVPPTLLSAFQLPQSSLLTLTQYAFLATALACFAQAFCGHRRAIMEGPGGLWWGTILTITLGEASRGTPINDIATSLAVGIALSGVLTMLIGFSGLGHRLARLFTPSVMVLFMLMLGAQLTTIFFKGMLGLPFGIADPNFKIQLPPFALSVAVMCLVLAMIIFLPQRFARYGLLVGTITGWLLWYFCFPSSHSLSGELHWQWFPLGSGGALSPGIILTAVITGLVNISNTYGAIRGTDVFYPQQGAGNTRYRRSFVATGFMTLITVPLAVIPFSPFVSSIGLLTQTGDYTRRSFIYGSVICLLVALVPALTRLFCSIPLPVSSAVMLVSYLPLLFSALVFSQQITFTARNIYRLALPLFVGIFLMALPPVYLQDLPLTLRPLLSNGLLVGILLAVLMDNLIPWERIE</sequence>
<reference key="1">
    <citation type="journal article" date="1999" name="J. Bacteriol.">
        <title>Genetic analysis of a chromosomal region containing genes required for assimilation of allantoin nitrogen and linked glyoxylate metabolism in Escherichia coli.</title>
        <authorList>
            <person name="Cusa E."/>
            <person name="Obradors N."/>
            <person name="Baldoma L."/>
            <person name="Badia J."/>
            <person name="Aguilar J."/>
        </authorList>
    </citation>
    <scope>NUCLEOTIDE SEQUENCE [GENOMIC DNA]</scope>
    <source>
        <strain>K12 / ECL1</strain>
    </source>
</reference>
<reference key="2">
    <citation type="submission" date="1997-01" db="EMBL/GenBank/DDBJ databases">
        <title>Sequence of minutes 4-25 of Escherichia coli.</title>
        <authorList>
            <person name="Chung E."/>
            <person name="Allen E."/>
            <person name="Araujo R."/>
            <person name="Aparicio A.M."/>
            <person name="Davis K."/>
            <person name="Duncan M."/>
            <person name="Federspiel N."/>
            <person name="Hyman R."/>
            <person name="Kalman S."/>
            <person name="Komp C."/>
            <person name="Kurdi O."/>
            <person name="Lew H."/>
            <person name="Lin D."/>
            <person name="Namath A."/>
            <person name="Oefner P."/>
            <person name="Roberts D."/>
            <person name="Schramm S."/>
            <person name="Davis R.W."/>
        </authorList>
    </citation>
    <scope>NUCLEOTIDE SEQUENCE [LARGE SCALE GENOMIC DNA]</scope>
    <source>
        <strain>K12 / MG1655 / ATCC 47076</strain>
    </source>
</reference>
<reference key="3">
    <citation type="journal article" date="1997" name="Science">
        <title>The complete genome sequence of Escherichia coli K-12.</title>
        <authorList>
            <person name="Blattner F.R."/>
            <person name="Plunkett G. III"/>
            <person name="Bloch C.A."/>
            <person name="Perna N.T."/>
            <person name="Burland V."/>
            <person name="Riley M."/>
            <person name="Collado-Vides J."/>
            <person name="Glasner J.D."/>
            <person name="Rode C.K."/>
            <person name="Mayhew G.F."/>
            <person name="Gregor J."/>
            <person name="Davis N.W."/>
            <person name="Kirkpatrick H.A."/>
            <person name="Goeden M.A."/>
            <person name="Rose D.J."/>
            <person name="Mau B."/>
            <person name="Shao Y."/>
        </authorList>
    </citation>
    <scope>NUCLEOTIDE SEQUENCE [LARGE SCALE GENOMIC DNA]</scope>
    <source>
        <strain>K12 / MG1655 / ATCC 47076</strain>
    </source>
</reference>
<reference key="4">
    <citation type="journal article" date="2006" name="Mol. Syst. Biol.">
        <title>Highly accurate genome sequences of Escherichia coli K-12 strains MG1655 and W3110.</title>
        <authorList>
            <person name="Hayashi K."/>
            <person name="Morooka N."/>
            <person name="Yamamoto Y."/>
            <person name="Fujita K."/>
            <person name="Isono K."/>
            <person name="Choi S."/>
            <person name="Ohtsubo E."/>
            <person name="Baba T."/>
            <person name="Wanner B.L."/>
            <person name="Mori H."/>
            <person name="Horiuchi T."/>
        </authorList>
    </citation>
    <scope>NUCLEOTIDE SEQUENCE [LARGE SCALE GENOMIC DNA]</scope>
    <source>
        <strain>K12 / W3110 / ATCC 27325 / DSM 5911</strain>
    </source>
</reference>
<reference key="5">
    <citation type="journal article" date="2005" name="Science">
        <title>Global topology analysis of the Escherichia coli inner membrane proteome.</title>
        <authorList>
            <person name="Daley D.O."/>
            <person name="Rapp M."/>
            <person name="Granseth E."/>
            <person name="Melen K."/>
            <person name="Drew D."/>
            <person name="von Heijne G."/>
        </authorList>
    </citation>
    <scope>TOPOLOGY [LARGE SCALE ANALYSIS]</scope>
    <source>
        <strain>K12 / MG1655 / ATCC 47076</strain>
    </source>
</reference>
<gene>
    <name type="primary">ybbY</name>
    <name type="synonym">glxB4</name>
    <name type="ordered locus">b0513</name>
    <name type="ordered locus">JW0501</name>
</gene>
<keyword id="KW-0997">Cell inner membrane</keyword>
<keyword id="KW-1003">Cell membrane</keyword>
<keyword id="KW-0472">Membrane</keyword>
<keyword id="KW-1185">Reference proteome</keyword>
<keyword id="KW-0812">Transmembrane</keyword>
<keyword id="KW-1133">Transmembrane helix</keyword>
<keyword id="KW-0813">Transport</keyword>
<proteinExistence type="evidence at protein level"/>
<feature type="chain" id="PRO_0000165963" description="Putative purine permease YbbY">
    <location>
        <begin position="1"/>
        <end position="433"/>
    </location>
</feature>
<feature type="topological domain" description="Periplasmic" evidence="1">
    <location>
        <begin position="1"/>
        <end position="17"/>
    </location>
</feature>
<feature type="transmembrane region" description="Helical" evidence="1">
    <location>
        <begin position="18"/>
        <end position="38"/>
    </location>
</feature>
<feature type="topological domain" description="Cytoplasmic" evidence="1">
    <location>
        <begin position="39"/>
        <end position="42"/>
    </location>
</feature>
<feature type="transmembrane region" description="Helical" evidence="1">
    <location>
        <begin position="43"/>
        <end position="63"/>
    </location>
</feature>
<feature type="topological domain" description="Periplasmic" evidence="1">
    <location>
        <begin position="64"/>
        <end position="68"/>
    </location>
</feature>
<feature type="transmembrane region" description="Helical" evidence="1">
    <location>
        <begin position="69"/>
        <end position="89"/>
    </location>
</feature>
<feature type="topological domain" description="Cytoplasmic" evidence="1">
    <location>
        <begin position="90"/>
        <end position="102"/>
    </location>
</feature>
<feature type="transmembrane region" description="Helical" evidence="1">
    <location>
        <begin position="103"/>
        <end position="123"/>
    </location>
</feature>
<feature type="topological domain" description="Periplasmic" evidence="1">
    <location>
        <begin position="124"/>
        <end position="130"/>
    </location>
</feature>
<feature type="transmembrane region" description="Helical" evidence="1">
    <location>
        <begin position="131"/>
        <end position="151"/>
    </location>
</feature>
<feature type="topological domain" description="Cytoplasmic" evidence="1">
    <location>
        <begin position="152"/>
        <end position="169"/>
    </location>
</feature>
<feature type="transmembrane region" description="Helical" evidence="1">
    <location>
        <begin position="170"/>
        <end position="190"/>
    </location>
</feature>
<feature type="topological domain" description="Periplasmic" evidence="1">
    <location>
        <begin position="191"/>
        <end position="196"/>
    </location>
</feature>
<feature type="transmembrane region" description="Helical" evidence="1">
    <location>
        <begin position="197"/>
        <end position="217"/>
    </location>
</feature>
<feature type="topological domain" description="Cytoplasmic" evidence="1">
    <location>
        <begin position="218"/>
        <end position="230"/>
    </location>
</feature>
<feature type="transmembrane region" description="Helical" evidence="1">
    <location>
        <begin position="231"/>
        <end position="251"/>
    </location>
</feature>
<feature type="topological domain" description="Periplasmic" evidence="1">
    <location>
        <begin position="252"/>
        <end position="288"/>
    </location>
</feature>
<feature type="transmembrane region" description="Helical" evidence="1">
    <location>
        <begin position="289"/>
        <end position="309"/>
    </location>
</feature>
<feature type="topological domain" description="Cytoplasmic" evidence="1">
    <location>
        <begin position="310"/>
        <end position="319"/>
    </location>
</feature>
<feature type="transmembrane region" description="Helical" evidence="1">
    <location>
        <begin position="320"/>
        <end position="340"/>
    </location>
</feature>
<feature type="topological domain" description="Periplasmic" evidence="1">
    <location>
        <begin position="341"/>
        <end position="345"/>
    </location>
</feature>
<feature type="transmembrane region" description="Helical" evidence="1">
    <location>
        <begin position="346"/>
        <end position="366"/>
    </location>
</feature>
<feature type="topological domain" description="Cytoplasmic" evidence="1">
    <location>
        <begin position="367"/>
        <end position="379"/>
    </location>
</feature>
<feature type="transmembrane region" description="Helical" evidence="1">
    <location>
        <begin position="380"/>
        <end position="400"/>
    </location>
</feature>
<feature type="topological domain" description="Periplasmic" evidence="1">
    <location>
        <begin position="401"/>
        <end position="407"/>
    </location>
</feature>
<feature type="transmembrane region" description="Helical" evidence="1">
    <location>
        <begin position="408"/>
        <end position="428"/>
    </location>
</feature>
<feature type="topological domain" description="Cytoplasmic" evidence="1">
    <location>
        <begin position="429"/>
        <end position="433"/>
    </location>
</feature>
<comment type="subcellular location">
    <subcellularLocation>
        <location>Cell inner membrane</location>
        <topology>Multi-pass membrane protein</topology>
    </subcellularLocation>
</comment>
<comment type="induction">
    <text>By glyoxylate.</text>
</comment>
<comment type="similarity">
    <text evidence="2">Belongs to the nucleobase:cation symporter-2 (NCS2) (TC 2.A.40) family.</text>
</comment>
<comment type="sequence caution" evidence="2">
    <conflict type="erroneous initiation">
        <sequence resource="EMBL-CDS" id="AAB40265"/>
    </conflict>
    <text>Extended N-terminus.</text>
</comment>
<accession>P77328</accession>
<accession>Q2MBR5</accession>
<name>YBBY_ECOLI</name>